<accession>A6VH72</accession>
<gene>
    <name type="ordered locus">MmarC7_0731</name>
</gene>
<protein>
    <recommendedName>
        <fullName>Lactaldehyde dehydrogenase</fullName>
        <ecNumber>1.2.1.22</ecNumber>
    </recommendedName>
</protein>
<reference key="1">
    <citation type="submission" date="2007-06" db="EMBL/GenBank/DDBJ databases">
        <title>Complete sequence of Methanococcus maripaludis C7.</title>
        <authorList>
            <consortium name="US DOE Joint Genome Institute"/>
            <person name="Copeland A."/>
            <person name="Lucas S."/>
            <person name="Lapidus A."/>
            <person name="Barry K."/>
            <person name="Glavina del Rio T."/>
            <person name="Dalin E."/>
            <person name="Tice H."/>
            <person name="Pitluck S."/>
            <person name="Clum A."/>
            <person name="Schmutz J."/>
            <person name="Larimer F."/>
            <person name="Land M."/>
            <person name="Hauser L."/>
            <person name="Kyrpides N."/>
            <person name="Anderson I."/>
            <person name="Sieprawska-Lupa M."/>
            <person name="Whitman W.B."/>
            <person name="Richardson P."/>
        </authorList>
    </citation>
    <scope>NUCLEOTIDE SEQUENCE [LARGE SCALE GENOMIC DNA]</scope>
    <source>
        <strain>C7 / ATCC BAA-1331</strain>
    </source>
</reference>
<feature type="chain" id="PRO_0000342591" description="Lactaldehyde dehydrogenase">
    <location>
        <begin position="1"/>
        <end position="465"/>
    </location>
</feature>
<feature type="active site" evidence="2">
    <location>
        <position position="240"/>
    </location>
</feature>
<feature type="active site" evidence="2">
    <location>
        <position position="274"/>
    </location>
</feature>
<feature type="binding site" evidence="1">
    <location>
        <begin position="220"/>
        <end position="225"/>
    </location>
    <ligand>
        <name>NAD(+)</name>
        <dbReference type="ChEBI" id="CHEBI:57540"/>
    </ligand>
</feature>
<name>LADH_METM7</name>
<evidence type="ECO:0000250" key="1"/>
<evidence type="ECO:0000255" key="2">
    <source>
        <dbReference type="PROSITE-ProRule" id="PRU10007"/>
    </source>
</evidence>
<evidence type="ECO:0000305" key="3"/>
<sequence length="465" mass="51010">MFIDGKWIIRDDIDVFDPYTLKNIEKITALDREETKNAIEITEKNKEVMKNLSPSKRYSILMKIAEQISLKKDLFAKTISIDVGKPIKQSKIEVDRTLTAFRLSAFYAKELRGETINSENGLIFTKKEPLGVVGAITPFNFPLNLITHKIGPAIATGNSVILHPSSKAPIAAIYLTKIIEHVLKQMDIPRGVFNLATGNGDIVGDEISKNDKINMVSFTGSVEIGESISKNAKMKKVTLELGGNNPMIVLKDSDIKLAAKSAVKSKFLNAGQVCISVGQVLVEEEVLETFTKYIIDETKNLVLGNPLDTKTDIGPLISPESALRIENLIKESVNEGGELLIGGNRQNSLIFPAVINIDEDNLLSKIETFGPVLPILKVKNSEEAVSIANNSKYGLQAGVFTNDINKAMKIADSLEYGGIMINSSPTFRKDNMPFGGVKKSGLGREGIKYTVEEMCETKTVVIHNI</sequence>
<proteinExistence type="inferred from homology"/>
<organism>
    <name type="scientific">Methanococcus maripaludis (strain C7 / ATCC BAA-1331)</name>
    <dbReference type="NCBI Taxonomy" id="426368"/>
    <lineage>
        <taxon>Archaea</taxon>
        <taxon>Methanobacteriati</taxon>
        <taxon>Methanobacteriota</taxon>
        <taxon>Methanomada group</taxon>
        <taxon>Methanococci</taxon>
        <taxon>Methanococcales</taxon>
        <taxon>Methanococcaceae</taxon>
        <taxon>Methanococcus</taxon>
    </lineage>
</organism>
<keyword id="KW-0520">NAD</keyword>
<keyword id="KW-0560">Oxidoreductase</keyword>
<dbReference type="EC" id="1.2.1.22"/>
<dbReference type="EMBL" id="CP000745">
    <property type="protein sequence ID" value="ABR65798.1"/>
    <property type="molecule type" value="Genomic_DNA"/>
</dbReference>
<dbReference type="SMR" id="A6VH72"/>
<dbReference type="STRING" id="426368.MmarC7_0731"/>
<dbReference type="KEGG" id="mmz:MmarC7_0731"/>
<dbReference type="eggNOG" id="arCOG01252">
    <property type="taxonomic scope" value="Archaea"/>
</dbReference>
<dbReference type="HOGENOM" id="CLU_005391_1_0_2"/>
<dbReference type="OrthoDB" id="6342at2157"/>
<dbReference type="UniPathway" id="UPA00071"/>
<dbReference type="GO" id="GO:0008911">
    <property type="term" value="F:lactaldehyde dehydrogenase (NAD+) activity"/>
    <property type="evidence" value="ECO:0007669"/>
    <property type="project" value="UniProtKB-EC"/>
</dbReference>
<dbReference type="CDD" id="cd07145">
    <property type="entry name" value="ALDH_LactADH_F420-Bios"/>
    <property type="match status" value="1"/>
</dbReference>
<dbReference type="FunFam" id="3.40.605.10:FF:000007">
    <property type="entry name" value="NAD/NADP-dependent betaine aldehyde dehydrogenase"/>
    <property type="match status" value="1"/>
</dbReference>
<dbReference type="Gene3D" id="3.40.605.10">
    <property type="entry name" value="Aldehyde Dehydrogenase, Chain A, domain 1"/>
    <property type="match status" value="1"/>
</dbReference>
<dbReference type="Gene3D" id="3.40.309.10">
    <property type="entry name" value="Aldehyde Dehydrogenase, Chain A, domain 2"/>
    <property type="match status" value="1"/>
</dbReference>
<dbReference type="InterPro" id="IPR016161">
    <property type="entry name" value="Ald_DH/histidinol_DH"/>
</dbReference>
<dbReference type="InterPro" id="IPR016163">
    <property type="entry name" value="Ald_DH_C"/>
</dbReference>
<dbReference type="InterPro" id="IPR029510">
    <property type="entry name" value="Ald_DH_CS_GLU"/>
</dbReference>
<dbReference type="InterPro" id="IPR016162">
    <property type="entry name" value="Ald_DH_N"/>
</dbReference>
<dbReference type="InterPro" id="IPR015590">
    <property type="entry name" value="Aldehyde_DH_dom"/>
</dbReference>
<dbReference type="InterPro" id="IPR051020">
    <property type="entry name" value="ALDH-related_metabolic_enz"/>
</dbReference>
<dbReference type="InterPro" id="IPR053404">
    <property type="entry name" value="Lactaldehyde_DH"/>
</dbReference>
<dbReference type="NCBIfam" id="NF040648">
    <property type="entry name" value="lactal_redase_Meth"/>
    <property type="match status" value="1"/>
</dbReference>
<dbReference type="PANTHER" id="PTHR42991">
    <property type="entry name" value="ALDEHYDE DEHYDROGENASE"/>
    <property type="match status" value="1"/>
</dbReference>
<dbReference type="PANTHER" id="PTHR42991:SF1">
    <property type="entry name" value="ALDEHYDE DEHYDROGENASE"/>
    <property type="match status" value="1"/>
</dbReference>
<dbReference type="Pfam" id="PF00171">
    <property type="entry name" value="Aldedh"/>
    <property type="match status" value="1"/>
</dbReference>
<dbReference type="SUPFAM" id="SSF53720">
    <property type="entry name" value="ALDH-like"/>
    <property type="match status" value="1"/>
</dbReference>
<dbReference type="PROSITE" id="PS00687">
    <property type="entry name" value="ALDEHYDE_DEHYDR_GLU"/>
    <property type="match status" value="1"/>
</dbReference>
<comment type="function">
    <text evidence="1">Involved in F420 biosynthesis through the oxidation of lactaldehyde to lactate.</text>
</comment>
<comment type="catalytic activity">
    <reaction>
        <text>(S)-lactaldehyde + NAD(+) + H2O = (S)-lactate + NADH + 2 H(+)</text>
        <dbReference type="Rhea" id="RHEA:14277"/>
        <dbReference type="ChEBI" id="CHEBI:15377"/>
        <dbReference type="ChEBI" id="CHEBI:15378"/>
        <dbReference type="ChEBI" id="CHEBI:16651"/>
        <dbReference type="ChEBI" id="CHEBI:18041"/>
        <dbReference type="ChEBI" id="CHEBI:57540"/>
        <dbReference type="ChEBI" id="CHEBI:57945"/>
        <dbReference type="EC" id="1.2.1.22"/>
    </reaction>
</comment>
<comment type="pathway">
    <text>Cofactor biosynthesis; coenzyme F420 biosynthesis.</text>
</comment>
<comment type="subunit">
    <text evidence="1">Homotetramer.</text>
</comment>
<comment type="similarity">
    <text evidence="3">Belongs to the aldehyde dehydrogenase family.</text>
</comment>